<protein>
    <recommendedName>
        <fullName evidence="1">L-lactate dehydrogenase 2</fullName>
        <shortName evidence="1">L-LDH 2</shortName>
        <ecNumber evidence="1">1.1.1.27</ecNumber>
    </recommendedName>
</protein>
<name>LDH2_BIFLO</name>
<gene>
    <name evidence="1" type="primary">ldh2</name>
    <name type="synonym">ldh</name>
    <name type="ordered locus">BL1308</name>
</gene>
<evidence type="ECO:0000255" key="1">
    <source>
        <dbReference type="HAMAP-Rule" id="MF_00488"/>
    </source>
</evidence>
<evidence type="ECO:0000269" key="2">
    <source>
    </source>
</evidence>
<evidence type="ECO:0000305" key="3"/>
<accession>P0CW93</accession>
<accession>P19869</accession>
<accession>Q9L505</accession>
<accession>Q9L506</accession>
<organism>
    <name type="scientific">Bifidobacterium longum (strain NCC 2705)</name>
    <dbReference type="NCBI Taxonomy" id="206672"/>
    <lineage>
        <taxon>Bacteria</taxon>
        <taxon>Bacillati</taxon>
        <taxon>Actinomycetota</taxon>
        <taxon>Actinomycetes</taxon>
        <taxon>Bifidobacteriales</taxon>
        <taxon>Bifidobacteriaceae</taxon>
        <taxon>Bifidobacterium</taxon>
    </lineage>
</organism>
<feature type="initiator methionine" description="Removed" evidence="2">
    <location>
        <position position="1"/>
    </location>
</feature>
<feature type="chain" id="PRO_0000168331" description="L-lactate dehydrogenase 2">
    <location>
        <begin position="2"/>
        <end position="320"/>
    </location>
</feature>
<feature type="active site" description="Proton acceptor" evidence="1">
    <location>
        <position position="181"/>
    </location>
</feature>
<feature type="binding site" evidence="1">
    <location>
        <position position="19"/>
    </location>
    <ligand>
        <name>NAD(+)</name>
        <dbReference type="ChEBI" id="CHEBI:57540"/>
    </ligand>
</feature>
<feature type="binding site" evidence="1">
    <location>
        <position position="40"/>
    </location>
    <ligand>
        <name>NAD(+)</name>
        <dbReference type="ChEBI" id="CHEBI:57540"/>
    </ligand>
</feature>
<feature type="binding site" evidence="1">
    <location>
        <position position="45"/>
    </location>
    <ligand>
        <name>NAD(+)</name>
        <dbReference type="ChEBI" id="CHEBI:57540"/>
    </ligand>
</feature>
<feature type="binding site" evidence="1">
    <location>
        <position position="88"/>
    </location>
    <ligand>
        <name>substrate</name>
    </ligand>
</feature>
<feature type="binding site" evidence="1">
    <location>
        <position position="94"/>
    </location>
    <ligand>
        <name>substrate</name>
    </ligand>
</feature>
<feature type="binding site" evidence="1">
    <location>
        <begin position="124"/>
        <end position="126"/>
    </location>
    <ligand>
        <name>NAD(+)</name>
        <dbReference type="ChEBI" id="CHEBI:57540"/>
    </ligand>
</feature>
<feature type="binding site" evidence="1">
    <location>
        <begin position="126"/>
        <end position="129"/>
    </location>
    <ligand>
        <name>substrate</name>
    </ligand>
</feature>
<feature type="binding site" evidence="1">
    <location>
        <position position="149"/>
    </location>
    <ligand>
        <name>NAD(+)</name>
        <dbReference type="ChEBI" id="CHEBI:57540"/>
    </ligand>
</feature>
<feature type="binding site" evidence="1">
    <location>
        <begin position="154"/>
        <end position="157"/>
    </location>
    <ligand>
        <name>substrate</name>
    </ligand>
</feature>
<feature type="binding site" evidence="1">
    <location>
        <position position="159"/>
    </location>
    <ligand>
        <name>beta-D-fructose 1,6-bisphosphate</name>
        <dbReference type="ChEBI" id="CHEBI:32966"/>
        <note>allosteric activator</note>
    </ligand>
</feature>
<feature type="binding site" evidence="1">
    <location>
        <position position="174"/>
    </location>
    <ligand>
        <name>beta-D-fructose 1,6-bisphosphate</name>
        <dbReference type="ChEBI" id="CHEBI:32966"/>
        <note>allosteric activator</note>
    </ligand>
</feature>
<feature type="binding site" evidence="1">
    <location>
        <position position="237"/>
    </location>
    <ligand>
        <name>substrate</name>
    </ligand>
</feature>
<feature type="modified residue" description="Phosphotyrosine" evidence="1">
    <location>
        <position position="228"/>
    </location>
</feature>
<keyword id="KW-0021">Allosteric enzyme</keyword>
<keyword id="KW-0963">Cytoplasm</keyword>
<keyword id="KW-0903">Direct protein sequencing</keyword>
<keyword id="KW-0520">NAD</keyword>
<keyword id="KW-0560">Oxidoreductase</keyword>
<keyword id="KW-0597">Phosphoprotein</keyword>
<keyword id="KW-1185">Reference proteome</keyword>
<reference key="1">
    <citation type="journal article" date="1989" name="Gene">
        <title>Sequence and characteristics of the Bifidobacterium longum gene encoding L-lactate dehydrogenase and the primary structure of the enzyme: a new feature of the allosteric site.</title>
        <authorList>
            <person name="Minowa T."/>
            <person name="Iwata S."/>
            <person name="Sakai H."/>
            <person name="Masaki H."/>
            <person name="Ohta T."/>
        </authorList>
    </citation>
    <scope>NUCLEOTIDE SEQUENCE [GENOMIC DNA]</scope>
    <scope>PROTEIN SEQUENCE OF 2-40 AND 315-320</scope>
    <source>
        <strain>AM 101-2</strain>
    </source>
</reference>
<reference key="2">
    <citation type="journal article" date="2002" name="Proc. Natl. Acad. Sci. U.S.A.">
        <title>The genome sequence of Bifidobacterium longum reflects its adaptation to the human gastrointestinal tract.</title>
        <authorList>
            <person name="Schell M.A."/>
            <person name="Karmirantzou M."/>
            <person name="Snel B."/>
            <person name="Vilanova D."/>
            <person name="Berger B."/>
            <person name="Pessi G."/>
            <person name="Zwahlen M.-C."/>
            <person name="Desiere F."/>
            <person name="Bork P."/>
            <person name="Delley M."/>
            <person name="Pridmore R.D."/>
            <person name="Arigoni F."/>
        </authorList>
    </citation>
    <scope>NUCLEOTIDE SEQUENCE [LARGE SCALE GENOMIC DNA]</scope>
    <source>
        <strain>NCC 2705</strain>
    </source>
</reference>
<reference key="3">
    <citation type="submission" date="2000-04" db="EMBL/GenBank/DDBJ databases">
        <authorList>
            <person name="Roy D."/>
            <person name="Sirois S."/>
        </authorList>
    </citation>
    <scope>NUCLEOTIDE SEQUENCE [GENOMIC DNA] OF 130-233</scope>
    <source>
        <strain>ATCC 15708 / JCM 7054 / LMG 10498 / S3</strain>
    </source>
</reference>
<proteinExistence type="evidence at protein level"/>
<dbReference type="EC" id="1.1.1.27" evidence="1"/>
<dbReference type="EMBL" id="M33585">
    <property type="protein sequence ID" value="AAA22900.1"/>
    <property type="molecule type" value="Genomic_DNA"/>
</dbReference>
<dbReference type="EMBL" id="AE014295">
    <property type="protein sequence ID" value="AAN25108.1"/>
    <property type="molecule type" value="Genomic_DNA"/>
</dbReference>
<dbReference type="EMBL" id="AF261670">
    <property type="protein sequence ID" value="AAF70511.1"/>
    <property type="molecule type" value="Genomic_DNA"/>
</dbReference>
<dbReference type="PIR" id="JQ0183">
    <property type="entry name" value="JQ0183"/>
</dbReference>
<dbReference type="RefSeq" id="NP_696472.1">
    <property type="nucleotide sequence ID" value="NC_004307.2"/>
</dbReference>
<dbReference type="RefSeq" id="WP_007052533.1">
    <property type="nucleotide sequence ID" value="NC_004307.2"/>
</dbReference>
<dbReference type="SMR" id="P0CW93"/>
<dbReference type="STRING" id="206672.BL1308"/>
<dbReference type="EnsemblBacteria" id="AAN25108">
    <property type="protein sequence ID" value="AAN25108"/>
    <property type="gene ID" value="BL1308"/>
</dbReference>
<dbReference type="KEGG" id="blo:BL1308"/>
<dbReference type="PATRIC" id="fig|206672.9.peg.158"/>
<dbReference type="HOGENOM" id="CLU_045401_1_1_11"/>
<dbReference type="OrthoDB" id="9802969at2"/>
<dbReference type="PhylomeDB" id="P0CW93"/>
<dbReference type="BRENDA" id="1.1.1.27">
    <property type="organism ID" value="851"/>
</dbReference>
<dbReference type="UniPathway" id="UPA00554">
    <property type="reaction ID" value="UER00611"/>
</dbReference>
<dbReference type="Proteomes" id="UP000000439">
    <property type="component" value="Chromosome"/>
</dbReference>
<dbReference type="GO" id="GO:0005737">
    <property type="term" value="C:cytoplasm"/>
    <property type="evidence" value="ECO:0007669"/>
    <property type="project" value="UniProtKB-SubCell"/>
</dbReference>
<dbReference type="GO" id="GO:0004459">
    <property type="term" value="F:L-lactate dehydrogenase activity"/>
    <property type="evidence" value="ECO:0007669"/>
    <property type="project" value="UniProtKB-UniRule"/>
</dbReference>
<dbReference type="GO" id="GO:0006096">
    <property type="term" value="P:glycolytic process"/>
    <property type="evidence" value="ECO:0007669"/>
    <property type="project" value="UniProtKB-UniRule"/>
</dbReference>
<dbReference type="GO" id="GO:0006089">
    <property type="term" value="P:lactate metabolic process"/>
    <property type="evidence" value="ECO:0007669"/>
    <property type="project" value="TreeGrafter"/>
</dbReference>
<dbReference type="CDD" id="cd05292">
    <property type="entry name" value="LDH_2"/>
    <property type="match status" value="1"/>
</dbReference>
<dbReference type="Gene3D" id="3.90.110.10">
    <property type="entry name" value="Lactate dehydrogenase/glycoside hydrolase, family 4, C-terminal"/>
    <property type="match status" value="1"/>
</dbReference>
<dbReference type="Gene3D" id="3.40.50.720">
    <property type="entry name" value="NAD(P)-binding Rossmann-like Domain"/>
    <property type="match status" value="1"/>
</dbReference>
<dbReference type="HAMAP" id="MF_00488">
    <property type="entry name" value="Lactate_dehydrog"/>
    <property type="match status" value="1"/>
</dbReference>
<dbReference type="InterPro" id="IPR001557">
    <property type="entry name" value="L-lactate/malate_DH"/>
</dbReference>
<dbReference type="InterPro" id="IPR011304">
    <property type="entry name" value="L-lactate_DH"/>
</dbReference>
<dbReference type="InterPro" id="IPR018177">
    <property type="entry name" value="L-lactate_DH_AS"/>
</dbReference>
<dbReference type="InterPro" id="IPR022383">
    <property type="entry name" value="Lactate/malate_DH_C"/>
</dbReference>
<dbReference type="InterPro" id="IPR001236">
    <property type="entry name" value="Lactate/malate_DH_N"/>
</dbReference>
<dbReference type="InterPro" id="IPR015955">
    <property type="entry name" value="Lactate_DH/Glyco_Ohase_4_C"/>
</dbReference>
<dbReference type="InterPro" id="IPR036291">
    <property type="entry name" value="NAD(P)-bd_dom_sf"/>
</dbReference>
<dbReference type="NCBIfam" id="TIGR01771">
    <property type="entry name" value="L-LDH-NAD"/>
    <property type="match status" value="1"/>
</dbReference>
<dbReference type="NCBIfam" id="NF004863">
    <property type="entry name" value="PRK06223.1"/>
    <property type="match status" value="1"/>
</dbReference>
<dbReference type="PANTHER" id="PTHR43128">
    <property type="entry name" value="L-2-HYDROXYCARBOXYLATE DEHYDROGENASE (NAD(P)(+))"/>
    <property type="match status" value="1"/>
</dbReference>
<dbReference type="PANTHER" id="PTHR43128:SF16">
    <property type="entry name" value="L-LACTATE DEHYDROGENASE"/>
    <property type="match status" value="1"/>
</dbReference>
<dbReference type="Pfam" id="PF02866">
    <property type="entry name" value="Ldh_1_C"/>
    <property type="match status" value="1"/>
</dbReference>
<dbReference type="Pfam" id="PF00056">
    <property type="entry name" value="Ldh_1_N"/>
    <property type="match status" value="1"/>
</dbReference>
<dbReference type="PIRSF" id="PIRSF000102">
    <property type="entry name" value="Lac_mal_DH"/>
    <property type="match status" value="1"/>
</dbReference>
<dbReference type="PRINTS" id="PR00086">
    <property type="entry name" value="LLDHDRGNASE"/>
</dbReference>
<dbReference type="SUPFAM" id="SSF56327">
    <property type="entry name" value="LDH C-terminal domain-like"/>
    <property type="match status" value="1"/>
</dbReference>
<dbReference type="SUPFAM" id="SSF51735">
    <property type="entry name" value="NAD(P)-binding Rossmann-fold domains"/>
    <property type="match status" value="1"/>
</dbReference>
<dbReference type="PROSITE" id="PS00064">
    <property type="entry name" value="L_LDH"/>
    <property type="match status" value="1"/>
</dbReference>
<sequence length="320" mass="34240">MAETTVKPTKLAVIGAGAVGSTLAFAAAQRGIAREIVLEDIAKERVEAEVLDMQHGSSFYPTVSIDGSDDPEICRDADMVVITAGPRQKPGQSRLELVGATVNILKAIMPNLVKVAPNAIYMLITNPVDIATHVAQKLTGLPENQIFGSGTNLDSARLRFLIAQQTGVNVKNVHAYIAGEHGDSEVPLWESATIGGVPMCDWTPLPGHDPLDADKREEIHQEVKNAAYKIINGKGATNYAIGMSGVDIIEAVLHDTNRILPVSSMLKDFHGISDICMSVPTLLNRQGVNNTINTPVSDKELAALKRSAETLKETAAQFGF</sequence>
<comment type="function">
    <text evidence="1">Catalyzes the conversion of lactate to pyruvate.</text>
</comment>
<comment type="catalytic activity">
    <reaction evidence="1">
        <text>(S)-lactate + NAD(+) = pyruvate + NADH + H(+)</text>
        <dbReference type="Rhea" id="RHEA:23444"/>
        <dbReference type="ChEBI" id="CHEBI:15361"/>
        <dbReference type="ChEBI" id="CHEBI:15378"/>
        <dbReference type="ChEBI" id="CHEBI:16651"/>
        <dbReference type="ChEBI" id="CHEBI:57540"/>
        <dbReference type="ChEBI" id="CHEBI:57945"/>
        <dbReference type="EC" id="1.1.1.27"/>
    </reaction>
</comment>
<comment type="activity regulation">
    <text evidence="1">Allosterically activated by fructose 1,6-bisphosphate (FBP).</text>
</comment>
<comment type="pathway">
    <text evidence="1">Fermentation; pyruvate fermentation to lactate; (S)-lactate from pyruvate: step 1/1.</text>
</comment>
<comment type="subunit">
    <text evidence="1">Homotetramer.</text>
</comment>
<comment type="subcellular location">
    <subcellularLocation>
        <location evidence="1">Cytoplasm</location>
    </subcellularLocation>
</comment>
<comment type="similarity">
    <text evidence="1 3">Belongs to the LDH/MDH superfamily. LDH family.</text>
</comment>